<feature type="transit peptide" description="Mitochondrion" evidence="1">
    <location>
        <begin position="1"/>
        <end position="45"/>
    </location>
</feature>
<feature type="chain" id="PRO_0000343448" description="ATP-dependent DNA helicase PIF1">
    <location>
        <begin position="46"/>
        <end position="859"/>
    </location>
</feature>
<feature type="DNA-binding region" evidence="3">
    <location>
        <begin position="727"/>
        <end position="746"/>
    </location>
</feature>
<feature type="region of interest" description="Disordered" evidence="4">
    <location>
        <begin position="142"/>
        <end position="183"/>
    </location>
</feature>
<feature type="region of interest" description="Disordered" evidence="4">
    <location>
        <begin position="782"/>
        <end position="859"/>
    </location>
</feature>
<feature type="compositionally biased region" description="Polar residues" evidence="4">
    <location>
        <begin position="142"/>
        <end position="157"/>
    </location>
</feature>
<feature type="compositionally biased region" description="Polar residues" evidence="4">
    <location>
        <begin position="172"/>
        <end position="182"/>
    </location>
</feature>
<feature type="compositionally biased region" description="Low complexity" evidence="4">
    <location>
        <begin position="800"/>
        <end position="809"/>
    </location>
</feature>
<feature type="compositionally biased region" description="Basic and acidic residues" evidence="4">
    <location>
        <begin position="844"/>
        <end position="859"/>
    </location>
</feature>
<feature type="binding site" evidence="3">
    <location>
        <begin position="258"/>
        <end position="265"/>
    </location>
    <ligand>
        <name>ATP</name>
        <dbReference type="ChEBI" id="CHEBI:30616"/>
    </ligand>
</feature>
<feature type="modified residue" description="Phosphoserine" evidence="2">
    <location>
        <position position="70"/>
    </location>
</feature>
<feature type="modified residue" description="Phosphoserine" evidence="2">
    <location>
        <position position="72"/>
    </location>
</feature>
<feature type="modified residue" description="Phosphoserine" evidence="2">
    <location>
        <position position="169"/>
    </location>
</feature>
<feature type="modified residue" description="Phosphoserine" evidence="2">
    <location>
        <position position="584"/>
    </location>
</feature>
<feature type="splice variant" id="VSP_034602" description="In isoform Nuclear." evidence="5">
    <location>
        <begin position="1"/>
        <end position="39"/>
    </location>
</feature>
<gene>
    <name evidence="3" type="primary">PIF1</name>
    <name type="synonym">TST1</name>
    <name type="ORF">SCY_4116</name>
</gene>
<protein>
    <recommendedName>
        <fullName evidence="3">ATP-dependent DNA helicase PIF1</fullName>
        <ecNumber evidence="3">5.6.2.3</ecNumber>
    </recommendedName>
    <alternativeName>
        <fullName evidence="3">DNA 5'-3' helicase PIF1</fullName>
    </alternativeName>
    <alternativeName>
        <fullName evidence="3">DNA repair and recombination helicase PIF1</fullName>
    </alternativeName>
    <alternativeName>
        <fullName>Petite integration frequency protein 1</fullName>
    </alternativeName>
    <alternativeName>
        <fullName>Telomere stability protein 1</fullName>
    </alternativeName>
</protein>
<proteinExistence type="inferred from homology"/>
<comment type="function">
    <text evidence="3">DNA-dependent ATPase and 5'-3' DNA helicase required for the maintenance of both mitochondrial and nuclear genome stability. Efficiently unwinds G-quadruplex (G4) DNA structures and forked RNA-DNA hybrids. Appears to move along DNA in single nucleotide or base pair steps, powered by hydrolysis of 1 molecule of ATP. Processes at an unwinding rate of about 75 bp/s. Resolves G4 structures, preventing replication pausing and double-strand breaks (DSBs) at G4 motifs. Involved in the maintenance of telomeric DNA. Inhibits telomere elongation, de novo telomere formation and telomere addition to DSBs via catalytic inhibition of telomerase. Reduces the processivity of telomerase by displacing active telomerase from DNA ends. Releases telomerase by unwinding the short telomerase RNA/telomeric DNA hybrid that is the intermediate in the telomerase reaction. Involved in the maintenance of ribosomal (rDNA). Required for efficient fork arrest at the replication fork barrier within rDNA. Involved in the maintenance of mitochondrial (mtDNA). Required to maintain mtDNA under conditions that introduce dsDNA breaks in mtDNA, either preventing or repairing dsDNA breaks. May inhibit replication progression to allow time for repair. May have a general role in chromosomal replication by affecting Okazaki fragment maturation. May have a role in conjunction with DNA2 helicase/nuclease in 5'-flap extension during Okazaki fragment processing (By similarity).</text>
</comment>
<comment type="catalytic activity">
    <reaction evidence="3">
        <text>Couples ATP hydrolysis with the unwinding of duplex DNA at the replication fork by translocating in the 5'-3' direction. This creates two antiparallel DNA single strands (ssDNA). The leading ssDNA polymer is the template for DNA polymerase III holoenzyme which synthesizes a continuous strand.</text>
        <dbReference type="EC" id="5.6.2.3"/>
    </reaction>
</comment>
<comment type="catalytic activity">
    <reaction evidence="3">
        <text>ATP + H2O = ADP + phosphate + H(+)</text>
        <dbReference type="Rhea" id="RHEA:13065"/>
        <dbReference type="ChEBI" id="CHEBI:15377"/>
        <dbReference type="ChEBI" id="CHEBI:15378"/>
        <dbReference type="ChEBI" id="CHEBI:30616"/>
        <dbReference type="ChEBI" id="CHEBI:43474"/>
        <dbReference type="ChEBI" id="CHEBI:456216"/>
        <dbReference type="EC" id="5.6.2.3"/>
    </reaction>
</comment>
<comment type="cofactor">
    <cofactor evidence="3">
        <name>Mg(2+)</name>
        <dbReference type="ChEBI" id="CHEBI:18420"/>
    </cofactor>
    <cofactor evidence="3">
        <name>Mn(2+)</name>
        <dbReference type="ChEBI" id="CHEBI:29035"/>
    </cofactor>
    <text evidence="3">Mg(2+). To a lesser extent, can also use Mn(2+).</text>
</comment>
<comment type="subunit">
    <text evidence="3">Monomer in solution. DNA binding induces dimerization. Associates with mitochondrial and telomeric DNA. Binding to mtDNA is non-specific and the protein seems to coat the entire mtDNA molecule. Binds to the telomerase RNA TLC1. Interacts with the mitochondrial single-strand DNA-binding protein RIM1 (By similarity).</text>
</comment>
<comment type="subcellular location">
    <molecule>Isoform Nuclear</molecule>
    <subcellularLocation>
        <location evidence="1">Nucleus</location>
        <location evidence="1">Nucleolus</location>
    </subcellularLocation>
    <text evidence="1">Mainly concentrated in the nucleolus, and occasionally redistributes to single nuclear foci outside the nucleolus, probably sites of DNA repair.</text>
</comment>
<comment type="subcellular location">
    <molecule>Isoform Mitochondrial</molecule>
    <subcellularLocation>
        <location evidence="3">Mitochondrion inner membrane</location>
        <topology evidence="1">Peripheral membrane protein</topology>
        <orientation evidence="1">Matrix side</orientation>
    </subcellularLocation>
    <text evidence="1">Bound to the mitochondrial inner membrane either directly or indirectly via a protein complex.</text>
</comment>
<comment type="alternative products">
    <event type="alternative initiation"/>
    <isoform>
        <id>A6ZM04-1</id>
        <name>Mitochondrial</name>
        <sequence type="displayed"/>
    </isoform>
    <isoform>
        <id>A6ZM04-2</id>
        <name>Nuclear</name>
        <sequence type="described" ref="VSP_034602"/>
    </isoform>
</comment>
<comment type="induction">
    <text evidence="1">Cell cycle-regulated. The nuclear isoform is present in very low amounts in G1 phase cells, but increases as cells progress through S phase, with a peak in late S/G2. The mitochondrial isoform follows a similar, but less pronounced induction pattern. The nuclear isoform is prone to APC/C-dependent degradation in G1, whereas the mitochondrial isoform is not (By similarity).</text>
</comment>
<comment type="PTM">
    <text evidence="1">Phosphorylated. Undergoes RAD53-dependent phosphorylation in response to loss of mtDNA (By similarity).</text>
</comment>
<comment type="similarity">
    <text evidence="3">Belongs to the helicase family. PIF1 subfamily.</text>
</comment>
<name>PIF1_YEAS7</name>
<accession>A6ZM04</accession>
<keyword id="KW-0024">Alternative initiation</keyword>
<keyword id="KW-0067">ATP-binding</keyword>
<keyword id="KW-0227">DNA damage</keyword>
<keyword id="KW-0233">DNA recombination</keyword>
<keyword id="KW-0234">DNA repair</keyword>
<keyword id="KW-0238">DNA-binding</keyword>
<keyword id="KW-0347">Helicase</keyword>
<keyword id="KW-0378">Hydrolase</keyword>
<keyword id="KW-0413">Isomerase</keyword>
<keyword id="KW-0472">Membrane</keyword>
<keyword id="KW-0496">Mitochondrion</keyword>
<keyword id="KW-0999">Mitochondrion inner membrane</keyword>
<keyword id="KW-0547">Nucleotide-binding</keyword>
<keyword id="KW-0539">Nucleus</keyword>
<keyword id="KW-0597">Phosphoprotein</keyword>
<keyword id="KW-0809">Transit peptide</keyword>
<dbReference type="EC" id="5.6.2.3" evidence="3"/>
<dbReference type="EMBL" id="AAFW02000020">
    <property type="protein sequence ID" value="EDN64334.1"/>
    <property type="molecule type" value="Genomic_DNA"/>
</dbReference>
<dbReference type="SMR" id="A6ZM04"/>
<dbReference type="HOGENOM" id="CLU_001613_0_0_1"/>
<dbReference type="Proteomes" id="UP000007060">
    <property type="component" value="Unassembled WGS sequence"/>
</dbReference>
<dbReference type="GO" id="GO:0005743">
    <property type="term" value="C:mitochondrial inner membrane"/>
    <property type="evidence" value="ECO:0007669"/>
    <property type="project" value="UniProtKB-SubCell"/>
</dbReference>
<dbReference type="GO" id="GO:0005730">
    <property type="term" value="C:nucleolus"/>
    <property type="evidence" value="ECO:0007669"/>
    <property type="project" value="UniProtKB-SubCell"/>
</dbReference>
<dbReference type="GO" id="GO:0043139">
    <property type="term" value="F:5'-3' DNA helicase activity"/>
    <property type="evidence" value="ECO:0007669"/>
    <property type="project" value="UniProtKB-UniRule"/>
</dbReference>
<dbReference type="GO" id="GO:0005524">
    <property type="term" value="F:ATP binding"/>
    <property type="evidence" value="ECO:0007669"/>
    <property type="project" value="UniProtKB-UniRule"/>
</dbReference>
<dbReference type="GO" id="GO:0016887">
    <property type="term" value="F:ATP hydrolysis activity"/>
    <property type="evidence" value="ECO:0007669"/>
    <property type="project" value="RHEA"/>
</dbReference>
<dbReference type="GO" id="GO:0051880">
    <property type="term" value="F:G-quadruplex DNA binding"/>
    <property type="evidence" value="ECO:0007669"/>
    <property type="project" value="UniProtKB-UniRule"/>
</dbReference>
<dbReference type="GO" id="GO:0010521">
    <property type="term" value="F:telomerase inhibitor activity"/>
    <property type="evidence" value="ECO:0007669"/>
    <property type="project" value="UniProtKB-UniRule"/>
</dbReference>
<dbReference type="GO" id="GO:0006310">
    <property type="term" value="P:DNA recombination"/>
    <property type="evidence" value="ECO:0007669"/>
    <property type="project" value="UniProtKB-UniRule"/>
</dbReference>
<dbReference type="GO" id="GO:0006281">
    <property type="term" value="P:DNA repair"/>
    <property type="evidence" value="ECO:0007669"/>
    <property type="project" value="UniProtKB-UniRule"/>
</dbReference>
<dbReference type="GO" id="GO:0000002">
    <property type="term" value="P:mitochondrial genome maintenance"/>
    <property type="evidence" value="ECO:0007669"/>
    <property type="project" value="UniProtKB-UniRule"/>
</dbReference>
<dbReference type="GO" id="GO:0032211">
    <property type="term" value="P:negative regulation of telomere maintenance via telomerase"/>
    <property type="evidence" value="ECO:0007669"/>
    <property type="project" value="UniProtKB-UniRule"/>
</dbReference>
<dbReference type="GO" id="GO:0000723">
    <property type="term" value="P:telomere maintenance"/>
    <property type="evidence" value="ECO:0007669"/>
    <property type="project" value="InterPro"/>
</dbReference>
<dbReference type="CDD" id="cd18037">
    <property type="entry name" value="DEXSc_Pif1_like"/>
    <property type="match status" value="1"/>
</dbReference>
<dbReference type="CDD" id="cd18809">
    <property type="entry name" value="SF1_C_RecD"/>
    <property type="match status" value="1"/>
</dbReference>
<dbReference type="FunFam" id="3.40.50.300:FF:001226">
    <property type="entry name" value="ATP-dependent DNA helicase PIF1"/>
    <property type="match status" value="1"/>
</dbReference>
<dbReference type="Gene3D" id="3.40.50.300">
    <property type="entry name" value="P-loop containing nucleotide triphosphate hydrolases"/>
    <property type="match status" value="1"/>
</dbReference>
<dbReference type="HAMAP" id="MF_03176">
    <property type="entry name" value="PIF1"/>
    <property type="match status" value="1"/>
</dbReference>
<dbReference type="InterPro" id="IPR010285">
    <property type="entry name" value="DNA_helicase_pif1-like_DEAD"/>
</dbReference>
<dbReference type="InterPro" id="IPR027417">
    <property type="entry name" value="P-loop_NTPase"/>
</dbReference>
<dbReference type="InterPro" id="IPR049163">
    <property type="entry name" value="Pif1-like_2B_dom"/>
</dbReference>
<dbReference type="InterPro" id="IPR051055">
    <property type="entry name" value="PIF1_helicase"/>
</dbReference>
<dbReference type="InterPro" id="IPR048293">
    <property type="entry name" value="PIF1_RRM3_pfh1"/>
</dbReference>
<dbReference type="PANTHER" id="PTHR47642">
    <property type="entry name" value="ATP-DEPENDENT DNA HELICASE"/>
    <property type="match status" value="1"/>
</dbReference>
<dbReference type="PANTHER" id="PTHR47642:SF5">
    <property type="entry name" value="ATP-DEPENDENT DNA HELICASE"/>
    <property type="match status" value="1"/>
</dbReference>
<dbReference type="Pfam" id="PF05970">
    <property type="entry name" value="PIF1"/>
    <property type="match status" value="1"/>
</dbReference>
<dbReference type="Pfam" id="PF21530">
    <property type="entry name" value="Pif1_2B_dom"/>
    <property type="match status" value="1"/>
</dbReference>
<dbReference type="SUPFAM" id="SSF52540">
    <property type="entry name" value="P-loop containing nucleoside triphosphate hydrolases"/>
    <property type="match status" value="2"/>
</dbReference>
<sequence length="859" mass="97628">MPKWIRSTLNHIIPRRPFICSFNSFLLLKNVSHAKLSFSMSSRGFRSNNFIQAQLKHPSILSKEDLDLLSDSDDWEEPDCIQLETEKQEKKIITDIHKEDPVDKKPMRDKNVMNFINKDSPLSWNDMFKPSIIQPPQLISENSFDQSSQKKSRSTGFKNPLRPALKKESSFDELQNSSISQERSLEMINENEKKKMQFGEKIAVLTQRPSFTELQNDQDDSNLNPHNGVKVKIPICLSKEQESIIKLAENGHNIFYTGSAGTGKSILLREMIKVLKGIYGRENVAVTASTGLAACNIGGITIHSFAGIGLGKGDADKLYKKVRRSRKHLRRWENIGALVVDEISMLDAELLDKLDFIARKIRKNHQPFGGIQLIFCGDFFQLPPVSKDPNRPTKFAFESKAWKEGVKMTIMLQKVFRQRGDVKFIDMLNRMRLGNIDDETEREFKKLSRPLPDDEIIPAELYSTRMEVERANNSRLSKLPGQVHIFNAIDGGALEDEELKERLLQNFLAPKELHLKVGAQVMMVKNLDATLVNGSLGKVIEFMDPETYFCYEALTNDPSMPPEKLETWAENPSKLKAAMEREQSDGEESAVASRKSSVKEGFAKSDIGEPVSPLDSSVFDFMKRVKTDDEVVLENIKRKEQLMQTIHQNSAGKRRLPLVRFKASDMSTRMVLVEPEDWAIEDENEKPLVSRVQLPLMLAWSLSIHKSQGQTLPKVKVDLRRVFEKGQAYVALSRAVSREGLQVLNFDRTRIKAHQKVIDFYLTLSSAESAYKQLEADEQVKKRKLDYAPGPKYKAKSKSKSNSPAPISATTQSNSGIAAMLQRHSRKRFQLKKESNSNQVHSLVSDEPRGQDTEDHILE</sequence>
<reference key="1">
    <citation type="journal article" date="2007" name="Proc. Natl. Acad. Sci. U.S.A.">
        <title>Genome sequencing and comparative analysis of Saccharomyces cerevisiae strain YJM789.</title>
        <authorList>
            <person name="Wei W."/>
            <person name="McCusker J.H."/>
            <person name="Hyman R.W."/>
            <person name="Jones T."/>
            <person name="Ning Y."/>
            <person name="Cao Z."/>
            <person name="Gu Z."/>
            <person name="Bruno D."/>
            <person name="Miranda M."/>
            <person name="Nguyen M."/>
            <person name="Wilhelmy J."/>
            <person name="Komp C."/>
            <person name="Tamse R."/>
            <person name="Wang X."/>
            <person name="Jia P."/>
            <person name="Luedi P."/>
            <person name="Oefner P.J."/>
            <person name="David L."/>
            <person name="Dietrich F.S."/>
            <person name="Li Y."/>
            <person name="Davis R.W."/>
            <person name="Steinmetz L.M."/>
        </authorList>
    </citation>
    <scope>NUCLEOTIDE SEQUENCE [LARGE SCALE GENOMIC DNA]</scope>
    <source>
        <strain>YJM789</strain>
    </source>
</reference>
<evidence type="ECO:0000250" key="1"/>
<evidence type="ECO:0000250" key="2">
    <source>
        <dbReference type="UniProtKB" id="P07271"/>
    </source>
</evidence>
<evidence type="ECO:0000255" key="3">
    <source>
        <dbReference type="HAMAP-Rule" id="MF_03176"/>
    </source>
</evidence>
<evidence type="ECO:0000256" key="4">
    <source>
        <dbReference type="SAM" id="MobiDB-lite"/>
    </source>
</evidence>
<evidence type="ECO:0000305" key="5"/>
<organism>
    <name type="scientific">Saccharomyces cerevisiae (strain YJM789)</name>
    <name type="common">Baker's yeast</name>
    <dbReference type="NCBI Taxonomy" id="307796"/>
    <lineage>
        <taxon>Eukaryota</taxon>
        <taxon>Fungi</taxon>
        <taxon>Dikarya</taxon>
        <taxon>Ascomycota</taxon>
        <taxon>Saccharomycotina</taxon>
        <taxon>Saccharomycetes</taxon>
        <taxon>Saccharomycetales</taxon>
        <taxon>Saccharomycetaceae</taxon>
        <taxon>Saccharomyces</taxon>
    </lineage>
</organism>